<sequence length="320" mass="34977">MYSLEEFNNQAINADFQRNNMFSCVFATTPSTKSSSLISSISNFSYNNLGLNSDWLGLTQGDINQGITTLITAGTQKLIRKSGVSKYLIGAMSQRTVQSLLGSFTVGTYLIDFFNMAYNSSGLMIYSVKMPENRLSYETDWNYNSPNIRITGRELDPLVISFRMDSEACNYRAMQDWVNSVQDPVTGLRALPQDVEADIQVNLHSRNGLPHTAVMFTMHSISVSAPELSYDGDNQITTFDVTFAYRVMQAGAVDRQRALEWLESAAINGIQSVLGNSGGVTGLSNSLSRLSRLGGTAGSISNINTMTGIVNSQSKILGAI</sequence>
<gene>
    <name type="primary">54</name>
</gene>
<organismHost>
    <name type="scientific">Escherichia coli</name>
    <dbReference type="NCBI Taxonomy" id="562"/>
</organismHost>
<accession>P13341</accession>
<reference key="1">
    <citation type="journal article" date="1988" name="Virology">
        <title>The structure of three bacteriophage T4 genes required for tail-tube assembly.</title>
        <authorList>
            <person name="Ishimoto L.K."/>
            <person name="Ishimoto K.S."/>
            <person name="Cascino A."/>
            <person name="Cipollaro M."/>
            <person name="Eiserling F.A."/>
        </authorList>
    </citation>
    <scope>NUCLEOTIDE SEQUENCE [GENOMIC DNA]</scope>
    <scope>FUNCTION</scope>
</reference>
<reference key="2">
    <citation type="journal article" date="2003" name="Microbiol. Mol. Biol. Rev.">
        <title>Bacteriophage T4 genome.</title>
        <authorList>
            <person name="Miller E.S."/>
            <person name="Kutter E."/>
            <person name="Mosig G."/>
            <person name="Arisaka F."/>
            <person name="Kunisawa T."/>
            <person name="Ruger W."/>
        </authorList>
    </citation>
    <scope>NUCLEOTIDE SEQUENCE [LARGE SCALE GENOMIC DNA]</scope>
</reference>
<reference key="3">
    <citation type="journal article" date="1990" name="J. Virol.">
        <title>Structure of the bacteriophage T4 baseplate as determined by chemical cross-linking.</title>
        <authorList>
            <person name="Watts N.R."/>
            <person name="Coombs D.H."/>
        </authorList>
    </citation>
    <scope>SUBCELLULAR LOCATION</scope>
    <scope>SUBUNIT</scope>
</reference>
<reference key="4">
    <citation type="journal article" date="2003" name="Cell. Mol. Life Sci.">
        <title>Structure and morphogenesis of bacteriophage T4.</title>
        <authorList>
            <person name="Leiman P.G."/>
            <person name="Kanamaru S."/>
            <person name="Mesyanzhinov V.V."/>
            <person name="Arisaka F."/>
            <person name="Rossmann M.G."/>
        </authorList>
    </citation>
    <scope>REVIEW</scope>
</reference>
<reference key="5">
    <citation type="journal article" date="2010" name="Virol. J.">
        <title>Morphogenesis of the T4 tail and tail fibers.</title>
        <authorList>
            <person name="Leiman P.G."/>
            <person name="Arisaka F."/>
            <person name="van Raaij M.J."/>
            <person name="Kostyuchenko V.A."/>
            <person name="Aksyuk A.A."/>
            <person name="Kanamaru S."/>
            <person name="Rossmann M.G."/>
        </authorList>
    </citation>
    <scope>REVIEW ON FUNCTION</scope>
</reference>
<reference key="6">
    <citation type="journal article" date="2010" name="J. Mol. Biol.">
        <title>The baseplate wedges of bacteriophage T4 spontaneously assemble into hubless baseplate-like structure in vitro.</title>
        <authorList>
            <person name="Yap M.L."/>
            <person name="Mio K."/>
            <person name="Leiman P.G."/>
            <person name="Kanamaru S."/>
            <person name="Arisaka F."/>
        </authorList>
    </citation>
    <scope>SUBUNIT</scope>
</reference>
<reference key="7">
    <citation type="journal article" date="2004" name="Cell">
        <title>Three-dimensional rearrangement of proteins in the tail of bacteriophage T4 on infection of its host.</title>
        <authorList>
            <person name="Leiman P.G."/>
            <person name="Chipman P.R."/>
            <person name="Kostyuchenko V.A."/>
            <person name="Mesyanzhinov V.V."/>
            <person name="Rossmann M.G."/>
        </authorList>
    </citation>
    <scope>STRUCTURE BY ELECTRON MICROSCOPY (17.0 ANGSTROMS) OF THE CONTRACTED TAIL</scope>
    <scope>SUBCELLULAR LOCATION</scope>
</reference>
<reference key="8">
    <citation type="journal article" date="2016" name="Nature">
        <title>Structure of the T4 baseplate and its function in triggering sheath contraction.</title>
        <authorList>
            <person name="Taylor N.M."/>
            <person name="Prokhorov N.S."/>
            <person name="Guerrero-Ferreira R.C."/>
            <person name="Shneider M.M."/>
            <person name="Browning C."/>
            <person name="Goldie K.N."/>
            <person name="Stahlberg H."/>
            <person name="Leiman P.G."/>
        </authorList>
    </citation>
    <scope>STRUCTURE BY ELECTRON MICROSCOPY (4.11 ANGSTROMS)</scope>
    <scope>SUBUNIT</scope>
    <scope>SUBCELLULAR LOCATION</scope>
    <scope>FUNCTION</scope>
</reference>
<name>BP54_BPT4</name>
<organism>
    <name type="scientific">Enterobacteria phage T4</name>
    <name type="common">Bacteriophage T4</name>
    <dbReference type="NCBI Taxonomy" id="10665"/>
    <lineage>
        <taxon>Viruses</taxon>
        <taxon>Duplodnaviria</taxon>
        <taxon>Heunggongvirae</taxon>
        <taxon>Uroviricota</taxon>
        <taxon>Caudoviricetes</taxon>
        <taxon>Straboviridae</taxon>
        <taxon>Tevenvirinae</taxon>
        <taxon>Tequatrovirus</taxon>
    </lineage>
</organism>
<keyword id="KW-0002">3D-structure</keyword>
<keyword id="KW-0426">Late protein</keyword>
<keyword id="KW-1185">Reference proteome</keyword>
<keyword id="KW-1226">Viral baseplate protein</keyword>
<keyword id="KW-1188">Viral release from host cell</keyword>
<keyword id="KW-1245">Viral tail assembly</keyword>
<keyword id="KW-1227">Viral tail protein</keyword>
<keyword id="KW-0946">Virion</keyword>
<evidence type="ECO:0000269" key="1">
    <source>
    </source>
</evidence>
<evidence type="ECO:0000269" key="2">
    <source>
    </source>
</evidence>
<evidence type="ECO:0000269" key="3">
    <source>
    </source>
</evidence>
<evidence type="ECO:0000269" key="4">
    <source>
    </source>
</evidence>
<evidence type="ECO:0000269" key="5">
    <source>
    </source>
</evidence>
<evidence type="ECO:0000303" key="6">
    <source>
    </source>
</evidence>
<evidence type="ECO:0000305" key="7"/>
<feature type="chain" id="PRO_0000165043" description="Baseplate tail-tube junction protein gp54">
    <location>
        <begin position="1"/>
        <end position="320"/>
    </location>
</feature>
<comment type="function">
    <text evidence="4 5 6">Baseplate protein that forms, together with gp48, the baseplate-tail tube junction. The tail tube first 2 annuli are formed by gp48 and gp54, which are in continuation of the spike complex. Involved in the tail assembly. Morphogenesis of the baseplate is completed by association of gp48 and gp54, which bind the upper part of the baseplate dome to form the platform for polymerization of the tail tube.</text>
</comment>
<comment type="subunit">
    <text evidence="2 3 4">Homohexamer (PubMed:27193680). The tube second annulus is composed of a gp54 hexameric ring. Interacts with the tail tube protein gp19. Interacts with the first layer of sheath proteins gp18. Part of the baseplate macromolecular complex which consists of gp5, gp5.4, gp27 (central spike complex); gp6, gp25, gp53 (inner baseplate); gp7, gp8 (intermediate baseplate); gp9, gp10, gp11, gp12 (peripheral); gp48 and gp54 (proximal region of the tail tube).</text>
</comment>
<comment type="subcellular location">
    <subcellularLocation>
        <location evidence="1 3 4">Virion</location>
    </subcellularLocation>
    <text evidence="6">Present in 6 copies in the baseplate.</text>
</comment>
<comment type="induction">
    <text evidence="7">Expressed in the late phase of the viral replicative cycle.</text>
</comment>
<dbReference type="EMBL" id="M20298">
    <property type="protein sequence ID" value="AAA32540.1"/>
    <property type="molecule type" value="Genomic_DNA"/>
</dbReference>
<dbReference type="EMBL" id="AF158101">
    <property type="protein sequence ID" value="AAD42490.1"/>
    <property type="molecule type" value="Genomic_DNA"/>
</dbReference>
<dbReference type="PIR" id="JF0037">
    <property type="entry name" value="GDBPT4"/>
</dbReference>
<dbReference type="RefSeq" id="NP_049807.1">
    <property type="nucleotide sequence ID" value="NC_000866.4"/>
</dbReference>
<dbReference type="PDB" id="5IV5">
    <property type="method" value="EM"/>
    <property type="resolution" value="4.11 A"/>
    <property type="chains" value="BG/DJ/GC/IF/W/t=1-320"/>
</dbReference>
<dbReference type="PDBsum" id="5IV5"/>
<dbReference type="SMR" id="P13341"/>
<dbReference type="TCDB" id="1.K.1.1.1">
    <property type="family name" value="the gp27/5 t4-baseplate (t4-bp) family"/>
</dbReference>
<dbReference type="GeneID" id="1258631"/>
<dbReference type="KEGG" id="vg:1258631"/>
<dbReference type="OrthoDB" id="4918at10239"/>
<dbReference type="Proteomes" id="UP000009087">
    <property type="component" value="Segment"/>
</dbReference>
<dbReference type="GO" id="GO:0098025">
    <property type="term" value="C:virus tail, baseplate"/>
    <property type="evidence" value="ECO:0000314"/>
    <property type="project" value="UniProtKB"/>
</dbReference>
<dbReference type="GO" id="GO:0098003">
    <property type="term" value="P:viral tail assembly"/>
    <property type="evidence" value="ECO:0007669"/>
    <property type="project" value="UniProtKB-KW"/>
</dbReference>
<protein>
    <recommendedName>
        <fullName evidence="7">Baseplate tail-tube junction protein gp54</fullName>
    </recommendedName>
    <alternativeName>
        <fullName>Gene product 54</fullName>
        <shortName>gp54</shortName>
    </alternativeName>
</protein>
<proteinExistence type="evidence at protein level"/>